<gene>
    <name evidence="1" type="primary">bchN</name>
    <name type="ordered locus">RoseRS_1910</name>
</gene>
<proteinExistence type="inferred from homology"/>
<sequence length="415" mass="45942">MPATVIREDGAYHSFCGLTCVGWLYQKIKDSFFLVLGTHTCAHLLQNVLGVMIFARPRFGVALIEEADLSKQQPELDRIIDEIVADHHPSVIFLLSSCTPEVMKVEFDGLARAVSRPNLPVLFVPASGLDYTFSQAEDSVLQALLPFCPVAPPDDRRVVFLGSVNDAIADDFRTEAARLGIPVAGFLPESHFHDLPPIGPGTVVAPLQPYLAKVAGRLARERGATVVSSLFPFGPDGTRAFWEDVAAAMGIAVDLRERERQAWERLEPHLDVLRGKKVFFTADNLMELPLARFLRHAGCTILECSSPYINRKFHARELEALDGVRVVEQPNFDRQLRDIQELRPDLVISNLATTNPLVGHGVVAKWSTEFSFMPIHGWSGAATLAGMFTRPLKRHAQLDPLMDDPLWVAGLMPAR</sequence>
<keyword id="KW-0004">4Fe-4S</keyword>
<keyword id="KW-0067">ATP-binding</keyword>
<keyword id="KW-0077">Bacteriochlorophyll biosynthesis</keyword>
<keyword id="KW-0149">Chlorophyll biosynthesis</keyword>
<keyword id="KW-0408">Iron</keyword>
<keyword id="KW-0411">Iron-sulfur</keyword>
<keyword id="KW-0479">Metal-binding</keyword>
<keyword id="KW-0547">Nucleotide-binding</keyword>
<keyword id="KW-0560">Oxidoreductase</keyword>
<keyword id="KW-0602">Photosynthesis</keyword>
<evidence type="ECO:0000255" key="1">
    <source>
        <dbReference type="HAMAP-Rule" id="MF_00352"/>
    </source>
</evidence>
<name>BCHN_ROSS1</name>
<accession>A5UUJ6</accession>
<feature type="chain" id="PRO_0000324025" description="Light-independent protochlorophyllide reductase subunit N">
    <location>
        <begin position="1"/>
        <end position="415"/>
    </location>
</feature>
<feature type="binding site" evidence="1">
    <location>
        <position position="16"/>
    </location>
    <ligand>
        <name>[4Fe-4S] cluster</name>
        <dbReference type="ChEBI" id="CHEBI:49883"/>
        <note>ligand shared with heterodimeric partner</note>
    </ligand>
</feature>
<feature type="binding site" evidence="1">
    <location>
        <position position="41"/>
    </location>
    <ligand>
        <name>[4Fe-4S] cluster</name>
        <dbReference type="ChEBI" id="CHEBI:49883"/>
        <note>ligand shared with heterodimeric partner</note>
    </ligand>
</feature>
<feature type="binding site" evidence="1">
    <location>
        <position position="98"/>
    </location>
    <ligand>
        <name>[4Fe-4S] cluster</name>
        <dbReference type="ChEBI" id="CHEBI:49883"/>
        <note>ligand shared with heterodimeric partner</note>
    </ligand>
</feature>
<reference key="1">
    <citation type="submission" date="2007-04" db="EMBL/GenBank/DDBJ databases">
        <title>Complete sequence of Roseiflexus sp. RS-1.</title>
        <authorList>
            <consortium name="US DOE Joint Genome Institute"/>
            <person name="Copeland A."/>
            <person name="Lucas S."/>
            <person name="Lapidus A."/>
            <person name="Barry K."/>
            <person name="Detter J.C."/>
            <person name="Glavina del Rio T."/>
            <person name="Hammon N."/>
            <person name="Israni S."/>
            <person name="Dalin E."/>
            <person name="Tice H."/>
            <person name="Pitluck S."/>
            <person name="Chertkov O."/>
            <person name="Brettin T."/>
            <person name="Bruce D."/>
            <person name="Han C."/>
            <person name="Schmutz J."/>
            <person name="Larimer F."/>
            <person name="Land M."/>
            <person name="Hauser L."/>
            <person name="Kyrpides N."/>
            <person name="Mikhailova N."/>
            <person name="Bryant D.A."/>
            <person name="Richardson P."/>
        </authorList>
    </citation>
    <scope>NUCLEOTIDE SEQUENCE [LARGE SCALE GENOMIC DNA]</scope>
    <source>
        <strain>RS-1</strain>
    </source>
</reference>
<comment type="function">
    <text evidence="1">Component of the dark-operative protochlorophyllide reductase (DPOR) that uses Mg-ATP and reduced ferredoxin to reduce ring D of protochlorophyllide (Pchlide) to form chlorophyllide a (Chlide). This reaction is light-independent. The NB-protein (BchN-BchB) is the catalytic component of the complex.</text>
</comment>
<comment type="catalytic activity">
    <reaction evidence="1">
        <text>chlorophyllide a + oxidized 2[4Fe-4S]-[ferredoxin] + 2 ADP + 2 phosphate = protochlorophyllide a + reduced 2[4Fe-4S]-[ferredoxin] + 2 ATP + 2 H2O</text>
        <dbReference type="Rhea" id="RHEA:28202"/>
        <dbReference type="Rhea" id="RHEA-COMP:10002"/>
        <dbReference type="Rhea" id="RHEA-COMP:10004"/>
        <dbReference type="ChEBI" id="CHEBI:15377"/>
        <dbReference type="ChEBI" id="CHEBI:30616"/>
        <dbReference type="ChEBI" id="CHEBI:33722"/>
        <dbReference type="ChEBI" id="CHEBI:33723"/>
        <dbReference type="ChEBI" id="CHEBI:43474"/>
        <dbReference type="ChEBI" id="CHEBI:83348"/>
        <dbReference type="ChEBI" id="CHEBI:83350"/>
        <dbReference type="ChEBI" id="CHEBI:456216"/>
        <dbReference type="EC" id="1.3.7.7"/>
    </reaction>
</comment>
<comment type="cofactor">
    <cofactor evidence="1">
        <name>[4Fe-4S] cluster</name>
        <dbReference type="ChEBI" id="CHEBI:49883"/>
    </cofactor>
    <text evidence="1">Binds 1 [4Fe-4S] cluster per heterodimer. The cluster is bound at the heterodimer interface by residues from both subunits.</text>
</comment>
<comment type="pathway">
    <text evidence="1">Porphyrin-containing compound metabolism; bacteriochlorophyll biosynthesis (light-independent).</text>
</comment>
<comment type="subunit">
    <text evidence="1">Protochlorophyllide reductase is composed of three subunits; BchL, BchN and BchB. Forms a heterotetramer of two BchB and two BchN subunits.</text>
</comment>
<comment type="similarity">
    <text evidence="1">Belongs to the BchN/ChlN family.</text>
</comment>
<protein>
    <recommendedName>
        <fullName evidence="1">Light-independent protochlorophyllide reductase subunit N</fullName>
        <shortName evidence="1">DPOR subunit N</shortName>
        <shortName evidence="1">LI-POR subunit N</shortName>
        <ecNumber evidence="1">1.3.7.7</ecNumber>
    </recommendedName>
</protein>
<organism>
    <name type="scientific">Roseiflexus sp. (strain RS-1)</name>
    <dbReference type="NCBI Taxonomy" id="357808"/>
    <lineage>
        <taxon>Bacteria</taxon>
        <taxon>Bacillati</taxon>
        <taxon>Chloroflexota</taxon>
        <taxon>Chloroflexia</taxon>
        <taxon>Chloroflexales</taxon>
        <taxon>Roseiflexineae</taxon>
        <taxon>Roseiflexaceae</taxon>
        <taxon>Roseiflexus</taxon>
    </lineage>
</organism>
<dbReference type="EC" id="1.3.7.7" evidence="1"/>
<dbReference type="EMBL" id="CP000686">
    <property type="protein sequence ID" value="ABQ90299.1"/>
    <property type="molecule type" value="Genomic_DNA"/>
</dbReference>
<dbReference type="RefSeq" id="WP_011956645.1">
    <property type="nucleotide sequence ID" value="NC_009523.1"/>
</dbReference>
<dbReference type="SMR" id="A5UUJ6"/>
<dbReference type="STRING" id="357808.RoseRS_1910"/>
<dbReference type="KEGG" id="rrs:RoseRS_1910"/>
<dbReference type="eggNOG" id="COG2710">
    <property type="taxonomic scope" value="Bacteria"/>
</dbReference>
<dbReference type="HOGENOM" id="CLU_037170_0_0_0"/>
<dbReference type="OrthoDB" id="495776at2"/>
<dbReference type="UniPathway" id="UPA00671"/>
<dbReference type="Proteomes" id="UP000006554">
    <property type="component" value="Chromosome"/>
</dbReference>
<dbReference type="GO" id="GO:0051539">
    <property type="term" value="F:4 iron, 4 sulfur cluster binding"/>
    <property type="evidence" value="ECO:0007669"/>
    <property type="project" value="UniProtKB-UniRule"/>
</dbReference>
<dbReference type="GO" id="GO:0005524">
    <property type="term" value="F:ATP binding"/>
    <property type="evidence" value="ECO:0007669"/>
    <property type="project" value="UniProtKB-UniRule"/>
</dbReference>
<dbReference type="GO" id="GO:0046872">
    <property type="term" value="F:metal ion binding"/>
    <property type="evidence" value="ECO:0007669"/>
    <property type="project" value="UniProtKB-KW"/>
</dbReference>
<dbReference type="GO" id="GO:0016730">
    <property type="term" value="F:oxidoreductase activity, acting on iron-sulfur proteins as donors"/>
    <property type="evidence" value="ECO:0007669"/>
    <property type="project" value="InterPro"/>
</dbReference>
<dbReference type="GO" id="GO:0016636">
    <property type="term" value="F:oxidoreductase activity, acting on the CH-CH group of donors, iron-sulfur protein as acceptor"/>
    <property type="evidence" value="ECO:0007669"/>
    <property type="project" value="UniProtKB-UniRule"/>
</dbReference>
<dbReference type="GO" id="GO:0036070">
    <property type="term" value="P:light-independent bacteriochlorophyll biosynthetic process"/>
    <property type="evidence" value="ECO:0007669"/>
    <property type="project" value="UniProtKB-UniRule"/>
</dbReference>
<dbReference type="GO" id="GO:0019685">
    <property type="term" value="P:photosynthesis, dark reaction"/>
    <property type="evidence" value="ECO:0007669"/>
    <property type="project" value="InterPro"/>
</dbReference>
<dbReference type="Gene3D" id="3.40.50.1980">
    <property type="entry name" value="Nitrogenase molybdenum iron protein domain"/>
    <property type="match status" value="3"/>
</dbReference>
<dbReference type="HAMAP" id="MF_00352">
    <property type="entry name" value="ChlN_BchN"/>
    <property type="match status" value="1"/>
</dbReference>
<dbReference type="InterPro" id="IPR050293">
    <property type="entry name" value="LIPOR_BchN/ChlN"/>
</dbReference>
<dbReference type="InterPro" id="IPR000510">
    <property type="entry name" value="Nase/OxRdtase_comp1"/>
</dbReference>
<dbReference type="InterPro" id="IPR005970">
    <property type="entry name" value="Protochl_reductN"/>
</dbReference>
<dbReference type="NCBIfam" id="TIGR01279">
    <property type="entry name" value="DPOR_bchN"/>
    <property type="match status" value="1"/>
</dbReference>
<dbReference type="NCBIfam" id="NF002768">
    <property type="entry name" value="PRK02842.1"/>
    <property type="match status" value="1"/>
</dbReference>
<dbReference type="PANTHER" id="PTHR39429">
    <property type="entry name" value="LIGHT-INDEPENDENT PROTOCHLOROPHYLLIDE REDUCTASE SUBUNIT N"/>
    <property type="match status" value="1"/>
</dbReference>
<dbReference type="PANTHER" id="PTHR39429:SF3">
    <property type="entry name" value="LIGHT-INDEPENDENT PROTOCHLOROPHYLLIDE REDUCTASE SUBUNIT N"/>
    <property type="match status" value="1"/>
</dbReference>
<dbReference type="Pfam" id="PF00148">
    <property type="entry name" value="Oxidored_nitro"/>
    <property type="match status" value="1"/>
</dbReference>
<dbReference type="PIRSF" id="PIRSF000162">
    <property type="entry name" value="P_chlorophyll_rd"/>
    <property type="match status" value="1"/>
</dbReference>
<dbReference type="SUPFAM" id="SSF53807">
    <property type="entry name" value="Helical backbone' metal receptor"/>
    <property type="match status" value="1"/>
</dbReference>